<keyword id="KW-0119">Carbohydrate metabolism</keyword>
<keyword id="KW-0963">Cytoplasm</keyword>
<keyword id="KW-0413">Isomerase</keyword>
<keyword id="KW-0460">Magnesium</keyword>
<keyword id="KW-0479">Metal-binding</keyword>
<keyword id="KW-0859">Xylose metabolism</keyword>
<gene>
    <name evidence="1" type="primary">xylA</name>
    <name type="ordered locus">SPA3512</name>
</gene>
<dbReference type="EC" id="5.3.1.5" evidence="1"/>
<dbReference type="EMBL" id="CP000026">
    <property type="protein sequence ID" value="AAV79317.1"/>
    <property type="molecule type" value="Genomic_DNA"/>
</dbReference>
<dbReference type="RefSeq" id="WP_001149558.1">
    <property type="nucleotide sequence ID" value="NC_006511.1"/>
</dbReference>
<dbReference type="SMR" id="Q5PLM6"/>
<dbReference type="KEGG" id="spt:SPA3512"/>
<dbReference type="HOGENOM" id="CLU_037261_1_0_6"/>
<dbReference type="Proteomes" id="UP000008185">
    <property type="component" value="Chromosome"/>
</dbReference>
<dbReference type="GO" id="GO:0005737">
    <property type="term" value="C:cytoplasm"/>
    <property type="evidence" value="ECO:0007669"/>
    <property type="project" value="UniProtKB-SubCell"/>
</dbReference>
<dbReference type="GO" id="GO:0000287">
    <property type="term" value="F:magnesium ion binding"/>
    <property type="evidence" value="ECO:0007669"/>
    <property type="project" value="UniProtKB-UniRule"/>
</dbReference>
<dbReference type="GO" id="GO:0009045">
    <property type="term" value="F:xylose isomerase activity"/>
    <property type="evidence" value="ECO:0007669"/>
    <property type="project" value="UniProtKB-UniRule"/>
</dbReference>
<dbReference type="GO" id="GO:0042732">
    <property type="term" value="P:D-xylose metabolic process"/>
    <property type="evidence" value="ECO:0007669"/>
    <property type="project" value="UniProtKB-UniRule"/>
</dbReference>
<dbReference type="FunFam" id="3.20.20.150:FF:000002">
    <property type="entry name" value="Xylose isomerase"/>
    <property type="match status" value="1"/>
</dbReference>
<dbReference type="Gene3D" id="3.20.20.150">
    <property type="entry name" value="Divalent-metal-dependent TIM barrel enzymes"/>
    <property type="match status" value="1"/>
</dbReference>
<dbReference type="HAMAP" id="MF_00455">
    <property type="entry name" value="Xylose_isom_A"/>
    <property type="match status" value="1"/>
</dbReference>
<dbReference type="InterPro" id="IPR036237">
    <property type="entry name" value="Xyl_isomerase-like_sf"/>
</dbReference>
<dbReference type="InterPro" id="IPR013452">
    <property type="entry name" value="Xylose_isom_bac"/>
</dbReference>
<dbReference type="InterPro" id="IPR001998">
    <property type="entry name" value="Xylose_isomerase"/>
</dbReference>
<dbReference type="NCBIfam" id="NF003998">
    <property type="entry name" value="PRK05474.1"/>
    <property type="match status" value="1"/>
</dbReference>
<dbReference type="NCBIfam" id="TIGR02630">
    <property type="entry name" value="xylose_isom_A"/>
    <property type="match status" value="1"/>
</dbReference>
<dbReference type="PANTHER" id="PTHR48408">
    <property type="match status" value="1"/>
</dbReference>
<dbReference type="PANTHER" id="PTHR48408:SF1">
    <property type="entry name" value="XYLOSE ISOMERASE"/>
    <property type="match status" value="1"/>
</dbReference>
<dbReference type="PRINTS" id="PR00688">
    <property type="entry name" value="XYLOSISMRASE"/>
</dbReference>
<dbReference type="SUPFAM" id="SSF51658">
    <property type="entry name" value="Xylose isomerase-like"/>
    <property type="match status" value="1"/>
</dbReference>
<dbReference type="PROSITE" id="PS51415">
    <property type="entry name" value="XYLOSE_ISOMERASE"/>
    <property type="match status" value="1"/>
</dbReference>
<proteinExistence type="inferred from homology"/>
<accession>Q5PLM6</accession>
<sequence length="425" mass="47895">MQAYFDQLDRVRYEGPQSTNPLAFRHYNPDELVLGKRMEDHLRFAACYWHTFCWNGADMFGVGAFNRPWQQPGEALELAKRKADVAFEFFHKLNVPFYCFHDVDVSPEGASLKEYKNNFAQMVDVLAAKQEQSGVKLLWGTANCFTNPRYGAGAATNPDPEVFSCAATQVVTAMNATHKLGGENYVLWGGREGYETLLNTDLRQEREQIGRFMQMVVEHKHKMGFQGTLLIEPKPQEPTKHQYDYDVATVYGFLKQFGLEKEIKVNIEANHATLAGHSFHHEIATAIALGIFGSVDANRGDAQLGWDTDQFPISVEENALVMYEILKAGGFTTGGLNFDAKVRRQSTDKYDLFYGHIGAMDTMALSLKIAARMVEDGELGQQILKGQLSLGKLAQYAEQHHLAPVHQSGHQELLENLVNRYLFDK</sequence>
<comment type="catalytic activity">
    <reaction evidence="1">
        <text>alpha-D-xylose = alpha-D-xylulofuranose</text>
        <dbReference type="Rhea" id="RHEA:22816"/>
        <dbReference type="ChEBI" id="CHEBI:28518"/>
        <dbReference type="ChEBI" id="CHEBI:188998"/>
        <dbReference type="EC" id="5.3.1.5"/>
    </reaction>
</comment>
<comment type="cofactor">
    <cofactor evidence="1">
        <name>Mg(2+)</name>
        <dbReference type="ChEBI" id="CHEBI:18420"/>
    </cofactor>
    <text evidence="1">Binds 2 magnesium ions per subunit.</text>
</comment>
<comment type="subunit">
    <text evidence="1">Homotetramer.</text>
</comment>
<comment type="subcellular location">
    <subcellularLocation>
        <location evidence="1">Cytoplasm</location>
    </subcellularLocation>
</comment>
<comment type="similarity">
    <text evidence="1">Belongs to the xylose isomerase family.</text>
</comment>
<name>XYLA_SALPA</name>
<evidence type="ECO:0000255" key="1">
    <source>
        <dbReference type="HAMAP-Rule" id="MF_00455"/>
    </source>
</evidence>
<protein>
    <recommendedName>
        <fullName evidence="1">Xylose isomerase</fullName>
        <ecNumber evidence="1">5.3.1.5</ecNumber>
    </recommendedName>
</protein>
<organism>
    <name type="scientific">Salmonella paratyphi A (strain ATCC 9150 / SARB42)</name>
    <dbReference type="NCBI Taxonomy" id="295319"/>
    <lineage>
        <taxon>Bacteria</taxon>
        <taxon>Pseudomonadati</taxon>
        <taxon>Pseudomonadota</taxon>
        <taxon>Gammaproteobacteria</taxon>
        <taxon>Enterobacterales</taxon>
        <taxon>Enterobacteriaceae</taxon>
        <taxon>Salmonella</taxon>
    </lineage>
</organism>
<reference key="1">
    <citation type="journal article" date="2004" name="Nat. Genet.">
        <title>Comparison of genome degradation in Paratyphi A and Typhi, human-restricted serovars of Salmonella enterica that cause typhoid.</title>
        <authorList>
            <person name="McClelland M."/>
            <person name="Sanderson K.E."/>
            <person name="Clifton S.W."/>
            <person name="Latreille P."/>
            <person name="Porwollik S."/>
            <person name="Sabo A."/>
            <person name="Meyer R."/>
            <person name="Bieri T."/>
            <person name="Ozersky P."/>
            <person name="McLellan M."/>
            <person name="Harkins C.R."/>
            <person name="Wang C."/>
            <person name="Nguyen C."/>
            <person name="Berghoff A."/>
            <person name="Elliott G."/>
            <person name="Kohlberg S."/>
            <person name="Strong C."/>
            <person name="Du F."/>
            <person name="Carter J."/>
            <person name="Kremizki C."/>
            <person name="Layman D."/>
            <person name="Leonard S."/>
            <person name="Sun H."/>
            <person name="Fulton L."/>
            <person name="Nash W."/>
            <person name="Miner T."/>
            <person name="Minx P."/>
            <person name="Delehaunty K."/>
            <person name="Fronick C."/>
            <person name="Magrini V."/>
            <person name="Nhan M."/>
            <person name="Warren W."/>
            <person name="Florea L."/>
            <person name="Spieth J."/>
            <person name="Wilson R.K."/>
        </authorList>
    </citation>
    <scope>NUCLEOTIDE SEQUENCE [LARGE SCALE GENOMIC DNA]</scope>
    <source>
        <strain>ATCC 9150 / SARB42</strain>
    </source>
</reference>
<feature type="chain" id="PRO_0000236971" description="Xylose isomerase">
    <location>
        <begin position="1"/>
        <end position="425"/>
    </location>
</feature>
<feature type="active site" evidence="1">
    <location>
        <position position="101"/>
    </location>
</feature>
<feature type="active site" evidence="1">
    <location>
        <position position="104"/>
    </location>
</feature>
<feature type="binding site" evidence="1">
    <location>
        <position position="232"/>
    </location>
    <ligand>
        <name>Mg(2+)</name>
        <dbReference type="ChEBI" id="CHEBI:18420"/>
        <label>1</label>
    </ligand>
</feature>
<feature type="binding site" evidence="1">
    <location>
        <position position="268"/>
    </location>
    <ligand>
        <name>Mg(2+)</name>
        <dbReference type="ChEBI" id="CHEBI:18420"/>
        <label>1</label>
    </ligand>
</feature>
<feature type="binding site" evidence="1">
    <location>
        <position position="268"/>
    </location>
    <ligand>
        <name>Mg(2+)</name>
        <dbReference type="ChEBI" id="CHEBI:18420"/>
        <label>2</label>
    </ligand>
</feature>
<feature type="binding site" evidence="1">
    <location>
        <position position="271"/>
    </location>
    <ligand>
        <name>Mg(2+)</name>
        <dbReference type="ChEBI" id="CHEBI:18420"/>
        <label>2</label>
    </ligand>
</feature>
<feature type="binding site" evidence="1">
    <location>
        <position position="296"/>
    </location>
    <ligand>
        <name>Mg(2+)</name>
        <dbReference type="ChEBI" id="CHEBI:18420"/>
        <label>1</label>
    </ligand>
</feature>
<feature type="binding site" evidence="1">
    <location>
        <position position="307"/>
    </location>
    <ligand>
        <name>Mg(2+)</name>
        <dbReference type="ChEBI" id="CHEBI:18420"/>
        <label>2</label>
    </ligand>
</feature>
<feature type="binding site" evidence="1">
    <location>
        <position position="309"/>
    </location>
    <ligand>
        <name>Mg(2+)</name>
        <dbReference type="ChEBI" id="CHEBI:18420"/>
        <label>2</label>
    </ligand>
</feature>
<feature type="binding site" evidence="1">
    <location>
        <position position="339"/>
    </location>
    <ligand>
        <name>Mg(2+)</name>
        <dbReference type="ChEBI" id="CHEBI:18420"/>
        <label>1</label>
    </ligand>
</feature>